<keyword id="KW-1185">Reference proteome</keyword>
<organism>
    <name type="scientific">Bos taurus</name>
    <name type="common">Bovine</name>
    <dbReference type="NCBI Taxonomy" id="9913"/>
    <lineage>
        <taxon>Eukaryota</taxon>
        <taxon>Metazoa</taxon>
        <taxon>Chordata</taxon>
        <taxon>Craniata</taxon>
        <taxon>Vertebrata</taxon>
        <taxon>Euteleostomi</taxon>
        <taxon>Mammalia</taxon>
        <taxon>Eutheria</taxon>
        <taxon>Laurasiatheria</taxon>
        <taxon>Artiodactyla</taxon>
        <taxon>Ruminantia</taxon>
        <taxon>Pecora</taxon>
        <taxon>Bovidae</taxon>
        <taxon>Bovinae</taxon>
        <taxon>Bos</taxon>
    </lineage>
</organism>
<comment type="sequence caution" evidence="2">
    <conflict type="frameshift">
        <sequence resource="EMBL-CDS" id="AAI02664"/>
    </conflict>
</comment>
<name>CL054_BOVIN</name>
<dbReference type="EMBL" id="BC102663">
    <property type="protein sequence ID" value="AAI02664.1"/>
    <property type="status" value="ALT_FRAME"/>
    <property type="molecule type" value="mRNA"/>
</dbReference>
<dbReference type="RefSeq" id="NP_001070460.1">
    <property type="nucleotide sequence ID" value="NM_001076992.1"/>
</dbReference>
<dbReference type="SMR" id="Q3SZX7"/>
<dbReference type="STRING" id="9913.ENSBTAP00000049336"/>
<dbReference type="PaxDb" id="9913-ENSBTAP00000022602"/>
<dbReference type="Ensembl" id="ENSBTAT00000053272.2">
    <property type="protein sequence ID" value="ENSBTAP00000049336.1"/>
    <property type="gene ID" value="ENSBTAG00000016996.5"/>
</dbReference>
<dbReference type="GeneID" id="767915"/>
<dbReference type="KEGG" id="bta:767915"/>
<dbReference type="CTD" id="767915"/>
<dbReference type="VEuPathDB" id="HostDB:ENSBTAG00000016996"/>
<dbReference type="VGNC" id="VGNC:55855">
    <property type="gene designation" value="C5H12orf54"/>
</dbReference>
<dbReference type="eggNOG" id="ENOG502RVJP">
    <property type="taxonomic scope" value="Eukaryota"/>
</dbReference>
<dbReference type="GeneTree" id="ENSGT00390000014843"/>
<dbReference type="HOGENOM" id="CLU_162771_0_0_1"/>
<dbReference type="InParanoid" id="Q3SZX7"/>
<dbReference type="OMA" id="DQSACYP"/>
<dbReference type="OrthoDB" id="9594515at2759"/>
<dbReference type="TreeFam" id="TF353746"/>
<dbReference type="Proteomes" id="UP000009136">
    <property type="component" value="Chromosome 5"/>
</dbReference>
<dbReference type="Bgee" id="ENSBTAG00000016996">
    <property type="expression patterns" value="Expressed in semen and 19 other cell types or tissues"/>
</dbReference>
<dbReference type="InterPro" id="IPR031465">
    <property type="entry name" value="DUF4681"/>
</dbReference>
<dbReference type="Pfam" id="PF15732">
    <property type="entry name" value="DUF4681"/>
    <property type="match status" value="1"/>
</dbReference>
<feature type="chain" id="PRO_0000274304" description="Uncharacterized protein C12orf54 homolog">
    <location>
        <begin position="1"/>
        <end position="124"/>
    </location>
</feature>
<feature type="region of interest" description="Disordered" evidence="1">
    <location>
        <begin position="1"/>
        <end position="31"/>
    </location>
</feature>
<feature type="region of interest" description="Disordered" evidence="1">
    <location>
        <begin position="59"/>
        <end position="124"/>
    </location>
</feature>
<feature type="compositionally biased region" description="Polar residues" evidence="1">
    <location>
        <begin position="65"/>
        <end position="86"/>
    </location>
</feature>
<feature type="compositionally biased region" description="Polar residues" evidence="1">
    <location>
        <begin position="98"/>
        <end position="124"/>
    </location>
</feature>
<sequence length="124" mass="13675">MAQHAFQDQEQEEGRNSRQQKRKSFEDTMKPKAVELTITETLWDQVLMAFKDIQNELQEDARTRGMSSVTPTSSASKIGTKTSDAATTPKLGRLLSGTGEQPSGIQAQNLRGQSSDQSACYPQP</sequence>
<protein>
    <recommendedName>
        <fullName>Uncharacterized protein C12orf54 homolog</fullName>
    </recommendedName>
</protein>
<accession>Q3SZX7</accession>
<evidence type="ECO:0000256" key="1">
    <source>
        <dbReference type="SAM" id="MobiDB-lite"/>
    </source>
</evidence>
<evidence type="ECO:0000305" key="2"/>
<proteinExistence type="evidence at transcript level"/>
<reference key="1">
    <citation type="submission" date="2005-08" db="EMBL/GenBank/DDBJ databases">
        <authorList>
            <consortium name="NIH - Mammalian Gene Collection (MGC) project"/>
        </authorList>
    </citation>
    <scope>NUCLEOTIDE SEQUENCE [LARGE SCALE MRNA]</scope>
    <source>
        <strain>Crossbred X Angus</strain>
        <tissue>Liver</tissue>
    </source>
</reference>